<proteinExistence type="inferred from homology"/>
<evidence type="ECO:0000255" key="1">
    <source>
        <dbReference type="HAMAP-Rule" id="MF_00206"/>
    </source>
</evidence>
<evidence type="ECO:0000255" key="2">
    <source>
        <dbReference type="PROSITE-ProRule" id="PRU01266"/>
    </source>
</evidence>
<keyword id="KW-0004">4Fe-4S</keyword>
<keyword id="KW-0963">Cytoplasm</keyword>
<keyword id="KW-0408">Iron</keyword>
<keyword id="KW-0411">Iron-sulfur</keyword>
<keyword id="KW-0479">Metal-binding</keyword>
<keyword id="KW-0949">S-adenosyl-L-methionine</keyword>
<keyword id="KW-0808">Transferase</keyword>
<sequence>MSKPIVMERGVKYRDADKMALIPVKNVATEREALLRKPEWMKIKLPADSTRIQGIKAAMRKNGLHSVCEEASCPNLAECFNHGTATFMILGAICTRRCPFCDVAHGRPVAPDANEPVKLAQTIADMALRYVVITSVDRDDLRDGGAQHFADCITAIREKSPQIKIETLVPDFRGRMDRALDILTATPPDVFNHNLENVPRIYRQVRPGADYNWSLKLLERFKEAHPEIPTKSGLMVGLGETNEEIIEVMRDLRRHGVTMLTLGQYLQPSRHHLPVQRYVSPDEFDEMKAEALAMGFTHAACGPFVRSSYHADLQAKGMEVK</sequence>
<comment type="function">
    <text evidence="1">Catalyzes the radical-mediated insertion of two sulfur atoms into the C-6 and C-8 positions of the octanoyl moiety bound to the lipoyl domains of lipoate-dependent enzymes, thereby converting the octanoylated domains into lipoylated derivatives.</text>
</comment>
<comment type="catalytic activity">
    <reaction evidence="1">
        <text>[[Fe-S] cluster scaffold protein carrying a second [4Fe-4S](2+) cluster] + N(6)-octanoyl-L-lysyl-[protein] + 2 oxidized [2Fe-2S]-[ferredoxin] + 2 S-adenosyl-L-methionine + 4 H(+) = [[Fe-S] cluster scaffold protein] + N(6)-[(R)-dihydrolipoyl]-L-lysyl-[protein] + 4 Fe(3+) + 2 hydrogen sulfide + 2 5'-deoxyadenosine + 2 L-methionine + 2 reduced [2Fe-2S]-[ferredoxin]</text>
        <dbReference type="Rhea" id="RHEA:16585"/>
        <dbReference type="Rhea" id="RHEA-COMP:9928"/>
        <dbReference type="Rhea" id="RHEA-COMP:10000"/>
        <dbReference type="Rhea" id="RHEA-COMP:10001"/>
        <dbReference type="Rhea" id="RHEA-COMP:10475"/>
        <dbReference type="Rhea" id="RHEA-COMP:14568"/>
        <dbReference type="Rhea" id="RHEA-COMP:14569"/>
        <dbReference type="ChEBI" id="CHEBI:15378"/>
        <dbReference type="ChEBI" id="CHEBI:17319"/>
        <dbReference type="ChEBI" id="CHEBI:29034"/>
        <dbReference type="ChEBI" id="CHEBI:29919"/>
        <dbReference type="ChEBI" id="CHEBI:33722"/>
        <dbReference type="ChEBI" id="CHEBI:33737"/>
        <dbReference type="ChEBI" id="CHEBI:33738"/>
        <dbReference type="ChEBI" id="CHEBI:57844"/>
        <dbReference type="ChEBI" id="CHEBI:59789"/>
        <dbReference type="ChEBI" id="CHEBI:78809"/>
        <dbReference type="ChEBI" id="CHEBI:83100"/>
        <dbReference type="EC" id="2.8.1.8"/>
    </reaction>
</comment>
<comment type="cofactor">
    <cofactor evidence="1">
        <name>[4Fe-4S] cluster</name>
        <dbReference type="ChEBI" id="CHEBI:49883"/>
    </cofactor>
    <text evidence="1">Binds 2 [4Fe-4S] clusters per subunit. One cluster is coordinated with 3 cysteines and an exchangeable S-adenosyl-L-methionine.</text>
</comment>
<comment type="pathway">
    <text evidence="1">Protein modification; protein lipoylation via endogenous pathway; protein N(6)-(lipoyl)lysine from octanoyl-[acyl-carrier-protein]: step 2/2.</text>
</comment>
<comment type="subcellular location">
    <subcellularLocation>
        <location evidence="1">Cytoplasm</location>
    </subcellularLocation>
</comment>
<comment type="similarity">
    <text evidence="1">Belongs to the radical SAM superfamily. Lipoyl synthase family.</text>
</comment>
<feature type="chain" id="PRO_1000077955" description="Lipoyl synthase">
    <location>
        <begin position="1"/>
        <end position="321"/>
    </location>
</feature>
<feature type="domain" description="Radical SAM core" evidence="2">
    <location>
        <begin position="80"/>
        <end position="297"/>
    </location>
</feature>
<feature type="binding site" evidence="1">
    <location>
        <position position="68"/>
    </location>
    <ligand>
        <name>[4Fe-4S] cluster</name>
        <dbReference type="ChEBI" id="CHEBI:49883"/>
        <label>1</label>
    </ligand>
</feature>
<feature type="binding site" evidence="1">
    <location>
        <position position="73"/>
    </location>
    <ligand>
        <name>[4Fe-4S] cluster</name>
        <dbReference type="ChEBI" id="CHEBI:49883"/>
        <label>1</label>
    </ligand>
</feature>
<feature type="binding site" evidence="1">
    <location>
        <position position="79"/>
    </location>
    <ligand>
        <name>[4Fe-4S] cluster</name>
        <dbReference type="ChEBI" id="CHEBI:49883"/>
        <label>1</label>
    </ligand>
</feature>
<feature type="binding site" evidence="1">
    <location>
        <position position="94"/>
    </location>
    <ligand>
        <name>[4Fe-4S] cluster</name>
        <dbReference type="ChEBI" id="CHEBI:49883"/>
        <label>2</label>
        <note>4Fe-4S-S-AdoMet</note>
    </ligand>
</feature>
<feature type="binding site" evidence="1">
    <location>
        <position position="98"/>
    </location>
    <ligand>
        <name>[4Fe-4S] cluster</name>
        <dbReference type="ChEBI" id="CHEBI:49883"/>
        <label>2</label>
        <note>4Fe-4S-S-AdoMet</note>
    </ligand>
</feature>
<feature type="binding site" evidence="1">
    <location>
        <position position="101"/>
    </location>
    <ligand>
        <name>[4Fe-4S] cluster</name>
        <dbReference type="ChEBI" id="CHEBI:49883"/>
        <label>2</label>
        <note>4Fe-4S-S-AdoMet</note>
    </ligand>
</feature>
<feature type="binding site" evidence="1">
    <location>
        <position position="308"/>
    </location>
    <ligand>
        <name>[4Fe-4S] cluster</name>
        <dbReference type="ChEBI" id="CHEBI:49883"/>
        <label>1</label>
    </ligand>
</feature>
<accession>B1IYI0</accession>
<organism>
    <name type="scientific">Escherichia coli (strain ATCC 8739 / DSM 1576 / NBRC 3972 / NCIMB 8545 / WDCM 00012 / Crooks)</name>
    <dbReference type="NCBI Taxonomy" id="481805"/>
    <lineage>
        <taxon>Bacteria</taxon>
        <taxon>Pseudomonadati</taxon>
        <taxon>Pseudomonadota</taxon>
        <taxon>Gammaproteobacteria</taxon>
        <taxon>Enterobacterales</taxon>
        <taxon>Enterobacteriaceae</taxon>
        <taxon>Escherichia</taxon>
    </lineage>
</organism>
<dbReference type="EC" id="2.8.1.8" evidence="1"/>
<dbReference type="EMBL" id="CP000946">
    <property type="protein sequence ID" value="ACA78642.1"/>
    <property type="molecule type" value="Genomic_DNA"/>
</dbReference>
<dbReference type="RefSeq" id="WP_000042632.1">
    <property type="nucleotide sequence ID" value="NZ_MTFT01000005.1"/>
</dbReference>
<dbReference type="SMR" id="B1IYI0"/>
<dbReference type="GeneID" id="93776854"/>
<dbReference type="KEGG" id="ecl:EcolC_3017"/>
<dbReference type="HOGENOM" id="CLU_033144_2_1_6"/>
<dbReference type="UniPathway" id="UPA00538">
    <property type="reaction ID" value="UER00593"/>
</dbReference>
<dbReference type="GO" id="GO:0005737">
    <property type="term" value="C:cytoplasm"/>
    <property type="evidence" value="ECO:0007669"/>
    <property type="project" value="UniProtKB-SubCell"/>
</dbReference>
<dbReference type="GO" id="GO:0051539">
    <property type="term" value="F:4 iron, 4 sulfur cluster binding"/>
    <property type="evidence" value="ECO:0007669"/>
    <property type="project" value="UniProtKB-UniRule"/>
</dbReference>
<dbReference type="GO" id="GO:0016992">
    <property type="term" value="F:lipoate synthase activity"/>
    <property type="evidence" value="ECO:0007669"/>
    <property type="project" value="UniProtKB-UniRule"/>
</dbReference>
<dbReference type="GO" id="GO:0046872">
    <property type="term" value="F:metal ion binding"/>
    <property type="evidence" value="ECO:0007669"/>
    <property type="project" value="UniProtKB-KW"/>
</dbReference>
<dbReference type="CDD" id="cd01335">
    <property type="entry name" value="Radical_SAM"/>
    <property type="match status" value="1"/>
</dbReference>
<dbReference type="FunFam" id="3.20.20.70:FF:000023">
    <property type="entry name" value="Lipoyl synthase"/>
    <property type="match status" value="1"/>
</dbReference>
<dbReference type="Gene3D" id="3.20.20.70">
    <property type="entry name" value="Aldolase class I"/>
    <property type="match status" value="1"/>
</dbReference>
<dbReference type="HAMAP" id="MF_00206">
    <property type="entry name" value="Lipoyl_synth"/>
    <property type="match status" value="1"/>
</dbReference>
<dbReference type="InterPro" id="IPR013785">
    <property type="entry name" value="Aldolase_TIM"/>
</dbReference>
<dbReference type="InterPro" id="IPR006638">
    <property type="entry name" value="Elp3/MiaA/NifB-like_rSAM"/>
</dbReference>
<dbReference type="InterPro" id="IPR031691">
    <property type="entry name" value="LIAS_N"/>
</dbReference>
<dbReference type="InterPro" id="IPR003698">
    <property type="entry name" value="Lipoyl_synth"/>
</dbReference>
<dbReference type="InterPro" id="IPR007197">
    <property type="entry name" value="rSAM"/>
</dbReference>
<dbReference type="NCBIfam" id="TIGR00510">
    <property type="entry name" value="lipA"/>
    <property type="match status" value="1"/>
</dbReference>
<dbReference type="NCBIfam" id="NF004019">
    <property type="entry name" value="PRK05481.1"/>
    <property type="match status" value="1"/>
</dbReference>
<dbReference type="NCBIfam" id="NF009544">
    <property type="entry name" value="PRK12928.1"/>
    <property type="match status" value="1"/>
</dbReference>
<dbReference type="PANTHER" id="PTHR10949">
    <property type="entry name" value="LIPOYL SYNTHASE"/>
    <property type="match status" value="1"/>
</dbReference>
<dbReference type="PANTHER" id="PTHR10949:SF0">
    <property type="entry name" value="LIPOYL SYNTHASE, MITOCHONDRIAL"/>
    <property type="match status" value="1"/>
</dbReference>
<dbReference type="Pfam" id="PF16881">
    <property type="entry name" value="LIAS_N"/>
    <property type="match status" value="1"/>
</dbReference>
<dbReference type="Pfam" id="PF04055">
    <property type="entry name" value="Radical_SAM"/>
    <property type="match status" value="1"/>
</dbReference>
<dbReference type="PIRSF" id="PIRSF005963">
    <property type="entry name" value="Lipoyl_synth"/>
    <property type="match status" value="1"/>
</dbReference>
<dbReference type="SFLD" id="SFLDF00271">
    <property type="entry name" value="lipoyl_synthase"/>
    <property type="match status" value="1"/>
</dbReference>
<dbReference type="SFLD" id="SFLDG01058">
    <property type="entry name" value="lipoyl_synthase_like"/>
    <property type="match status" value="1"/>
</dbReference>
<dbReference type="SMART" id="SM00729">
    <property type="entry name" value="Elp3"/>
    <property type="match status" value="1"/>
</dbReference>
<dbReference type="SUPFAM" id="SSF102114">
    <property type="entry name" value="Radical SAM enzymes"/>
    <property type="match status" value="1"/>
</dbReference>
<dbReference type="PROSITE" id="PS51918">
    <property type="entry name" value="RADICAL_SAM"/>
    <property type="match status" value="1"/>
</dbReference>
<name>LIPA_ECOLC</name>
<reference key="1">
    <citation type="submission" date="2008-02" db="EMBL/GenBank/DDBJ databases">
        <title>Complete sequence of Escherichia coli C str. ATCC 8739.</title>
        <authorList>
            <person name="Copeland A."/>
            <person name="Lucas S."/>
            <person name="Lapidus A."/>
            <person name="Glavina del Rio T."/>
            <person name="Dalin E."/>
            <person name="Tice H."/>
            <person name="Bruce D."/>
            <person name="Goodwin L."/>
            <person name="Pitluck S."/>
            <person name="Kiss H."/>
            <person name="Brettin T."/>
            <person name="Detter J.C."/>
            <person name="Han C."/>
            <person name="Kuske C.R."/>
            <person name="Schmutz J."/>
            <person name="Larimer F."/>
            <person name="Land M."/>
            <person name="Hauser L."/>
            <person name="Kyrpides N."/>
            <person name="Mikhailova N."/>
            <person name="Ingram L."/>
            <person name="Richardson P."/>
        </authorList>
    </citation>
    <scope>NUCLEOTIDE SEQUENCE [LARGE SCALE GENOMIC DNA]</scope>
    <source>
        <strain>ATCC 8739 / DSM 1576 / NBRC 3972 / NCIMB 8545 / WDCM 00012 / Crooks</strain>
    </source>
</reference>
<gene>
    <name evidence="1" type="primary">lipA</name>
    <name type="ordered locus">EcolC_3017</name>
</gene>
<protein>
    <recommendedName>
        <fullName evidence="1">Lipoyl synthase</fullName>
        <ecNumber evidence="1">2.8.1.8</ecNumber>
    </recommendedName>
    <alternativeName>
        <fullName evidence="1">Lip-syn</fullName>
        <shortName evidence="1">LS</shortName>
    </alternativeName>
    <alternativeName>
        <fullName evidence="1">Lipoate synthase</fullName>
    </alternativeName>
    <alternativeName>
        <fullName evidence="1">Lipoic acid synthase</fullName>
    </alternativeName>
    <alternativeName>
        <fullName evidence="1">Sulfur insertion protein LipA</fullName>
    </alternativeName>
</protein>